<organism>
    <name type="scientific">Escherichia coli O157:H7</name>
    <dbReference type="NCBI Taxonomy" id="83334"/>
    <lineage>
        <taxon>Bacteria</taxon>
        <taxon>Pseudomonadati</taxon>
        <taxon>Pseudomonadota</taxon>
        <taxon>Gammaproteobacteria</taxon>
        <taxon>Enterobacterales</taxon>
        <taxon>Enterobacteriaceae</taxon>
        <taxon>Escherichia</taxon>
    </lineage>
</organism>
<dbReference type="EC" id="2.7.7.19" evidence="1"/>
<dbReference type="EMBL" id="AE005174">
    <property type="protein sequence ID" value="AAG54447.1"/>
    <property type="status" value="ALT_INIT"/>
    <property type="molecule type" value="Genomic_DNA"/>
</dbReference>
<dbReference type="EMBL" id="BA000007">
    <property type="protein sequence ID" value="BAB33570.2"/>
    <property type="molecule type" value="Genomic_DNA"/>
</dbReference>
<dbReference type="RefSeq" id="NP_308174.3">
    <property type="nucleotide sequence ID" value="NC_002695.1"/>
</dbReference>
<dbReference type="RefSeq" id="WP_010723084.1">
    <property type="nucleotide sequence ID" value="NZ_VOAI01000002.1"/>
</dbReference>
<dbReference type="SMR" id="P0ABF3"/>
<dbReference type="STRING" id="155864.Z0154"/>
<dbReference type="GeneID" id="913763"/>
<dbReference type="GeneID" id="93777284"/>
<dbReference type="KEGG" id="ece:Z0154"/>
<dbReference type="KEGG" id="ecs:ECs_0147"/>
<dbReference type="PATRIC" id="fig|386585.9.peg.246"/>
<dbReference type="eggNOG" id="COG0617">
    <property type="taxonomic scope" value="Bacteria"/>
</dbReference>
<dbReference type="HOGENOM" id="CLU_015961_0_0_6"/>
<dbReference type="OMA" id="FMAKLDM"/>
<dbReference type="Proteomes" id="UP000000558">
    <property type="component" value="Chromosome"/>
</dbReference>
<dbReference type="Proteomes" id="UP000002519">
    <property type="component" value="Chromosome"/>
</dbReference>
<dbReference type="GO" id="GO:0005524">
    <property type="term" value="F:ATP binding"/>
    <property type="evidence" value="ECO:0007669"/>
    <property type="project" value="UniProtKB-UniRule"/>
</dbReference>
<dbReference type="GO" id="GO:1990817">
    <property type="term" value="F:poly(A) RNA polymerase activity"/>
    <property type="evidence" value="ECO:0007669"/>
    <property type="project" value="UniProtKB-UniRule"/>
</dbReference>
<dbReference type="GO" id="GO:0003723">
    <property type="term" value="F:RNA binding"/>
    <property type="evidence" value="ECO:0007669"/>
    <property type="project" value="UniProtKB-UniRule"/>
</dbReference>
<dbReference type="GO" id="GO:0006397">
    <property type="term" value="P:mRNA processing"/>
    <property type="evidence" value="ECO:0007669"/>
    <property type="project" value="UniProtKB-KW"/>
</dbReference>
<dbReference type="GO" id="GO:0043633">
    <property type="term" value="P:polyadenylation-dependent RNA catabolic process"/>
    <property type="evidence" value="ECO:0007669"/>
    <property type="project" value="InterPro"/>
</dbReference>
<dbReference type="CDD" id="cd05398">
    <property type="entry name" value="NT_ClassII-CCAase"/>
    <property type="match status" value="1"/>
</dbReference>
<dbReference type="FunFam" id="1.10.3090.10:FF:000003">
    <property type="entry name" value="Poly(A) polymerase I"/>
    <property type="match status" value="1"/>
</dbReference>
<dbReference type="FunFam" id="3.30.460.10:FF:000035">
    <property type="entry name" value="Poly(A) polymerase I"/>
    <property type="match status" value="1"/>
</dbReference>
<dbReference type="Gene3D" id="3.30.460.10">
    <property type="entry name" value="Beta Polymerase, domain 2"/>
    <property type="match status" value="1"/>
</dbReference>
<dbReference type="Gene3D" id="1.10.3090.10">
    <property type="entry name" value="cca-adding enzyme, domain 2"/>
    <property type="match status" value="1"/>
</dbReference>
<dbReference type="HAMAP" id="MF_00957">
    <property type="entry name" value="PolyA_pol"/>
    <property type="match status" value="1"/>
</dbReference>
<dbReference type="InterPro" id="IPR043519">
    <property type="entry name" value="NT_sf"/>
</dbReference>
<dbReference type="InterPro" id="IPR002646">
    <property type="entry name" value="PolA_pol_head_dom"/>
</dbReference>
<dbReference type="InterPro" id="IPR010206">
    <property type="entry name" value="PolA_pol_I"/>
</dbReference>
<dbReference type="InterPro" id="IPR025866">
    <property type="entry name" value="PolyA_pol_arg_C_dom"/>
</dbReference>
<dbReference type="InterPro" id="IPR032828">
    <property type="entry name" value="PolyA_RNA-bd"/>
</dbReference>
<dbReference type="InterPro" id="IPR052191">
    <property type="entry name" value="tRNA_ntf/polyA_polymerase_I"/>
</dbReference>
<dbReference type="NCBIfam" id="TIGR01942">
    <property type="entry name" value="pcnB"/>
    <property type="match status" value="1"/>
</dbReference>
<dbReference type="NCBIfam" id="NF008634">
    <property type="entry name" value="PRK11623.1"/>
    <property type="match status" value="1"/>
</dbReference>
<dbReference type="PANTHER" id="PTHR43051">
    <property type="entry name" value="POLYNUCLEOTIDE ADENYLYLTRANSFERASE FAMILY PROTEIN"/>
    <property type="match status" value="1"/>
</dbReference>
<dbReference type="PANTHER" id="PTHR43051:SF1">
    <property type="entry name" value="POLYNUCLEOTIDE ADENYLYLTRANSFERASE FAMILY PROTEIN"/>
    <property type="match status" value="1"/>
</dbReference>
<dbReference type="Pfam" id="PF01743">
    <property type="entry name" value="PolyA_pol"/>
    <property type="match status" value="1"/>
</dbReference>
<dbReference type="Pfam" id="PF12626">
    <property type="entry name" value="PolyA_pol_arg_C"/>
    <property type="match status" value="1"/>
</dbReference>
<dbReference type="Pfam" id="PF12627">
    <property type="entry name" value="PolyA_pol_RNAbd"/>
    <property type="match status" value="1"/>
</dbReference>
<dbReference type="SUPFAM" id="SSF81301">
    <property type="entry name" value="Nucleotidyltransferase"/>
    <property type="match status" value="1"/>
</dbReference>
<dbReference type="SUPFAM" id="SSF81891">
    <property type="entry name" value="Poly A polymerase C-terminal region-like"/>
    <property type="match status" value="1"/>
</dbReference>
<proteinExistence type="inferred from homology"/>
<sequence>MFTRVANFCRKVLSREESEAEQAVARPQVTVIPREQHAISRKDISENALKVMYRLNKAGYEAWLVGGGVRDLLLGKKPKDFDVTTNATPEQVRKLFRNCRLVGRRFRLAHVMFGPEIIEVATFRGHHEGNVSDRTTSQRGQNGMLLRDNIFGSIEEDAQRRDFTINSLYYSVADFTVRDYVGGMKDLKDGVIRLIGNPETRYREDPVRMLRAVRFAAKLGMRISPETAEPIPRLATLLNDIPPARLFEESLKLLQAGYGYETYKLLCEYHLFQPLFPTITRYFTENGDSPMERIIEQVLKNTDTRIHNDMRVNPAFLFAAMFWYPLLETAQKIAQESGLTYHDAFALAMNDVLDEACRSLAIPKRLTTLTRDIWQLQLRMSRRQGKRAWKLLEHPKFRAAYDLLALRAEVERNAELQRLVKWWGEFQVSAPPDQKGMLNELDEEPSPRRRTRRPRKRAPRREGTA</sequence>
<reference key="1">
    <citation type="journal article" date="2001" name="Nature">
        <title>Genome sequence of enterohaemorrhagic Escherichia coli O157:H7.</title>
        <authorList>
            <person name="Perna N.T."/>
            <person name="Plunkett G. III"/>
            <person name="Burland V."/>
            <person name="Mau B."/>
            <person name="Glasner J.D."/>
            <person name="Rose D.J."/>
            <person name="Mayhew G.F."/>
            <person name="Evans P.S."/>
            <person name="Gregor J."/>
            <person name="Kirkpatrick H.A."/>
            <person name="Posfai G."/>
            <person name="Hackett J."/>
            <person name="Klink S."/>
            <person name="Boutin A."/>
            <person name="Shao Y."/>
            <person name="Miller L."/>
            <person name="Grotbeck E.J."/>
            <person name="Davis N.W."/>
            <person name="Lim A."/>
            <person name="Dimalanta E.T."/>
            <person name="Potamousis K."/>
            <person name="Apodaca J."/>
            <person name="Anantharaman T.S."/>
            <person name="Lin J."/>
            <person name="Yen G."/>
            <person name="Schwartz D.C."/>
            <person name="Welch R.A."/>
            <person name="Blattner F.R."/>
        </authorList>
    </citation>
    <scope>NUCLEOTIDE SEQUENCE [LARGE SCALE GENOMIC DNA]</scope>
    <source>
        <strain>O157:H7 / EDL933 / ATCC 700927 / EHEC</strain>
    </source>
</reference>
<reference key="2">
    <citation type="journal article" date="2001" name="DNA Res.">
        <title>Complete genome sequence of enterohemorrhagic Escherichia coli O157:H7 and genomic comparison with a laboratory strain K-12.</title>
        <authorList>
            <person name="Hayashi T."/>
            <person name="Makino K."/>
            <person name="Ohnishi M."/>
            <person name="Kurokawa K."/>
            <person name="Ishii K."/>
            <person name="Yokoyama K."/>
            <person name="Han C.-G."/>
            <person name="Ohtsubo E."/>
            <person name="Nakayama K."/>
            <person name="Murata T."/>
            <person name="Tanaka M."/>
            <person name="Tobe T."/>
            <person name="Iida T."/>
            <person name="Takami H."/>
            <person name="Honda T."/>
            <person name="Sasakawa C."/>
            <person name="Ogasawara N."/>
            <person name="Yasunaga T."/>
            <person name="Kuhara S."/>
            <person name="Shiba T."/>
            <person name="Hattori M."/>
            <person name="Shinagawa H."/>
        </authorList>
    </citation>
    <scope>NUCLEOTIDE SEQUENCE [LARGE SCALE GENOMIC DNA]</scope>
    <source>
        <strain>O157:H7 / Sakai / RIMD 0509952 / EHEC</strain>
    </source>
</reference>
<protein>
    <recommendedName>
        <fullName evidence="1">Poly(A) polymerase I</fullName>
        <shortName evidence="1">PAP I</shortName>
        <ecNumber evidence="1">2.7.7.19</ecNumber>
    </recommendedName>
</protein>
<accession>P0ABF3</accession>
<accession>P13685</accession>
<accession>P78050</accession>
<accession>Q8X910</accession>
<keyword id="KW-0067">ATP-binding</keyword>
<keyword id="KW-0507">mRNA processing</keyword>
<keyword id="KW-0547">Nucleotide-binding</keyword>
<keyword id="KW-1185">Reference proteome</keyword>
<keyword id="KW-0694">RNA-binding</keyword>
<keyword id="KW-0804">Transcription</keyword>
<keyword id="KW-0808">Transferase</keyword>
<gene>
    <name evidence="1" type="primary">pcnB</name>
    <name type="ordered locus">Z0154</name>
    <name type="ordered locus">ECs0147</name>
</gene>
<name>PCNB_ECO57</name>
<comment type="function">
    <text evidence="1">Adds poly(A) tail to the 3' end of many RNAs, which usually targets these RNAs for decay. Plays a significant role in the global control of gene expression, through influencing the rate of transcript degradation, and in the general RNA quality control.</text>
</comment>
<comment type="catalytic activity">
    <reaction evidence="1">
        <text>RNA(n) + ATP = RNA(n)-3'-adenine ribonucleotide + diphosphate</text>
        <dbReference type="Rhea" id="RHEA:11332"/>
        <dbReference type="Rhea" id="RHEA-COMP:14527"/>
        <dbReference type="Rhea" id="RHEA-COMP:17347"/>
        <dbReference type="ChEBI" id="CHEBI:30616"/>
        <dbReference type="ChEBI" id="CHEBI:33019"/>
        <dbReference type="ChEBI" id="CHEBI:140395"/>
        <dbReference type="ChEBI" id="CHEBI:173115"/>
        <dbReference type="EC" id="2.7.7.19"/>
    </reaction>
</comment>
<comment type="similarity">
    <text evidence="1">Belongs to the tRNA nucleotidyltransferase/poly(A) polymerase family.</text>
</comment>
<comment type="sequence caution" evidence="3">
    <conflict type="erroneous initiation">
        <sequence resource="EMBL-CDS" id="AAG54447"/>
    </conflict>
    <text>Truncated N-terminus.</text>
</comment>
<evidence type="ECO:0000255" key="1">
    <source>
        <dbReference type="HAMAP-Rule" id="MF_00957"/>
    </source>
</evidence>
<evidence type="ECO:0000256" key="2">
    <source>
        <dbReference type="SAM" id="MobiDB-lite"/>
    </source>
</evidence>
<evidence type="ECO:0000305" key="3"/>
<feature type="chain" id="PRO_0000139091" description="Poly(A) polymerase I">
    <location>
        <begin position="1"/>
        <end position="465"/>
    </location>
</feature>
<feature type="region of interest" description="Disordered" evidence="2">
    <location>
        <begin position="429"/>
        <end position="465"/>
    </location>
</feature>
<feature type="compositionally biased region" description="Basic residues" evidence="2">
    <location>
        <begin position="448"/>
        <end position="459"/>
    </location>
</feature>
<feature type="active site" evidence="1">
    <location>
        <position position="80"/>
    </location>
</feature>
<feature type="active site" evidence="1">
    <location>
        <position position="82"/>
    </location>
</feature>
<feature type="active site" evidence="1">
    <location>
        <position position="162"/>
    </location>
</feature>